<accession>P31050</accession>
<name>YNG1_AZOBR</name>
<dbReference type="EMBL" id="X64772">
    <property type="protein sequence ID" value="CAA46019.1"/>
    <property type="molecule type" value="Genomic_DNA"/>
</dbReference>
<dbReference type="PIR" id="S20483">
    <property type="entry name" value="S20483"/>
</dbReference>
<organism>
    <name type="scientific">Azospirillum brasilense</name>
    <dbReference type="NCBI Taxonomy" id="192"/>
    <lineage>
        <taxon>Bacteria</taxon>
        <taxon>Pseudomonadati</taxon>
        <taxon>Pseudomonadota</taxon>
        <taxon>Alphaproteobacteria</taxon>
        <taxon>Rhodospirillales</taxon>
        <taxon>Azospirillaceae</taxon>
        <taxon>Azospirillum</taxon>
    </lineage>
</organism>
<protein>
    <recommendedName>
        <fullName>Uncharacterized protein in nodG 5'region</fullName>
    </recommendedName>
    <alternativeName>
        <fullName>ORF 1</fullName>
    </alternativeName>
</protein>
<feature type="chain" id="PRO_0000066323" description="Uncharacterized protein in nodG 5'region">
    <location>
        <begin position="1" status="less than"/>
        <end position="63"/>
    </location>
</feature>
<feature type="non-terminal residue">
    <location>
        <position position="1"/>
    </location>
</feature>
<proteinExistence type="predicted"/>
<sequence length="63" mass="6694">STIQIDGDVVTRLLKGRDTAGNSVVIGVHKDAVDVSFRYWSFLIDALGRFAGKAVNTLVGDTG</sequence>
<reference key="1">
    <citation type="journal article" date="1992" name="Mol. Gen. Genet.">
        <title>Characterization of an Azospirillum brasilense Sp7 gene homologous to Alcaligenes eutrophus phbB and to Rhizobium meliloti nodG.</title>
        <authorList>
            <person name="Vieille C."/>
            <person name="Elmerich C."/>
        </authorList>
    </citation>
    <scope>NUCLEOTIDE SEQUENCE [GENOMIC DNA]</scope>
    <source>
        <strain>ATCC 29145 / DSM 1690 / IMET 11303 / Sp7</strain>
    </source>
</reference>